<sequence>MLKGIHPAISPELLKVLAEMGHGDELVLSDAHFPAHSIHSKVIRADGIGVATLLEGISALFEFDQYVEAPLAMMQAVPGDTLDPSVEERYLAAIKKVNGSTPKVERVERFAFYDRAKTAYAVVITGELAKYGNIIIKKGVTPVK</sequence>
<gene>
    <name evidence="1" type="primary">fucU</name>
    <name type="ordered locus">APL_1686</name>
</gene>
<keyword id="KW-0119">Carbohydrate metabolism</keyword>
<keyword id="KW-0963">Cytoplasm</keyword>
<keyword id="KW-0294">Fucose metabolism</keyword>
<keyword id="KW-0413">Isomerase</keyword>
<keyword id="KW-1185">Reference proteome</keyword>
<evidence type="ECO:0000255" key="1">
    <source>
        <dbReference type="HAMAP-Rule" id="MF_01662"/>
    </source>
</evidence>
<name>FUCM_ACTP2</name>
<protein>
    <recommendedName>
        <fullName evidence="1">L-fucose mutarotase</fullName>
        <ecNumber evidence="1">5.1.3.29</ecNumber>
    </recommendedName>
    <alternativeName>
        <fullName evidence="1">Fucose 1-epimerase</fullName>
    </alternativeName>
    <alternativeName>
        <fullName evidence="1">Type-2 mutarotase</fullName>
    </alternativeName>
</protein>
<reference key="1">
    <citation type="journal article" date="2008" name="J. Bacteriol.">
        <title>The complete genome sequence of Actinobacillus pleuropneumoniae L20 (serotype 5b).</title>
        <authorList>
            <person name="Foote S.J."/>
            <person name="Bosse J.T."/>
            <person name="Bouevitch A.B."/>
            <person name="Langford P.R."/>
            <person name="Young N.M."/>
            <person name="Nash J.H.E."/>
        </authorList>
    </citation>
    <scope>NUCLEOTIDE SEQUENCE [LARGE SCALE GENOMIC DNA]</scope>
    <source>
        <strain>L20</strain>
    </source>
</reference>
<feature type="chain" id="PRO_0000344536" description="L-fucose mutarotase">
    <location>
        <begin position="1"/>
        <end position="144"/>
    </location>
</feature>
<feature type="active site" description="Proton donor" evidence="1">
    <location>
        <position position="22"/>
    </location>
</feature>
<feature type="binding site" evidence="1">
    <location>
        <position position="30"/>
    </location>
    <ligand>
        <name>substrate</name>
    </ligand>
</feature>
<feature type="binding site" evidence="1">
    <location>
        <position position="109"/>
    </location>
    <ligand>
        <name>substrate</name>
    </ligand>
</feature>
<feature type="binding site" evidence="1">
    <location>
        <begin position="131"/>
        <end position="133"/>
    </location>
    <ligand>
        <name>substrate</name>
    </ligand>
</feature>
<dbReference type="EC" id="5.1.3.29" evidence="1"/>
<dbReference type="EMBL" id="CP000569">
    <property type="protein sequence ID" value="ABN74770.1"/>
    <property type="molecule type" value="Genomic_DNA"/>
</dbReference>
<dbReference type="RefSeq" id="WP_005605693.1">
    <property type="nucleotide sequence ID" value="NC_009053.1"/>
</dbReference>
<dbReference type="SMR" id="A3N2Y4"/>
<dbReference type="STRING" id="416269.APL_1686"/>
<dbReference type="EnsemblBacteria" id="ABN74770">
    <property type="protein sequence ID" value="ABN74770"/>
    <property type="gene ID" value="APL_1686"/>
</dbReference>
<dbReference type="KEGG" id="apl:APL_1686"/>
<dbReference type="eggNOG" id="COG4154">
    <property type="taxonomic scope" value="Bacteria"/>
</dbReference>
<dbReference type="HOGENOM" id="CLU_120075_1_0_6"/>
<dbReference type="UniPathway" id="UPA00956"/>
<dbReference type="Proteomes" id="UP000001432">
    <property type="component" value="Chromosome"/>
</dbReference>
<dbReference type="GO" id="GO:0005737">
    <property type="term" value="C:cytoplasm"/>
    <property type="evidence" value="ECO:0007669"/>
    <property type="project" value="UniProtKB-SubCell"/>
</dbReference>
<dbReference type="GO" id="GO:0042806">
    <property type="term" value="F:fucose binding"/>
    <property type="evidence" value="ECO:0007669"/>
    <property type="project" value="InterPro"/>
</dbReference>
<dbReference type="GO" id="GO:0036373">
    <property type="term" value="F:L-fucose mutarotase activity"/>
    <property type="evidence" value="ECO:0007669"/>
    <property type="project" value="UniProtKB-EC"/>
</dbReference>
<dbReference type="GO" id="GO:0036065">
    <property type="term" value="P:fucosylation"/>
    <property type="evidence" value="ECO:0007669"/>
    <property type="project" value="TreeGrafter"/>
</dbReference>
<dbReference type="GO" id="GO:0042354">
    <property type="term" value="P:L-fucose metabolic process"/>
    <property type="evidence" value="ECO:0007669"/>
    <property type="project" value="UniProtKB-UniRule"/>
</dbReference>
<dbReference type="Gene3D" id="3.40.1650.10">
    <property type="entry name" value="RbsD-like domain"/>
    <property type="match status" value="1"/>
</dbReference>
<dbReference type="HAMAP" id="MF_01662">
    <property type="entry name" value="L_fucose_rotase"/>
    <property type="match status" value="1"/>
</dbReference>
<dbReference type="InterPro" id="IPR023751">
    <property type="entry name" value="L-fucose_mutarotase"/>
</dbReference>
<dbReference type="InterPro" id="IPR023750">
    <property type="entry name" value="RbsD-like_sf"/>
</dbReference>
<dbReference type="InterPro" id="IPR050443">
    <property type="entry name" value="RbsD/FucU_mutarotase"/>
</dbReference>
<dbReference type="InterPro" id="IPR007721">
    <property type="entry name" value="RbsD_FucU"/>
</dbReference>
<dbReference type="NCBIfam" id="NF011949">
    <property type="entry name" value="PRK15420.1"/>
    <property type="match status" value="1"/>
</dbReference>
<dbReference type="PANTHER" id="PTHR31690">
    <property type="entry name" value="FUCOSE MUTAROTASE"/>
    <property type="match status" value="1"/>
</dbReference>
<dbReference type="PANTHER" id="PTHR31690:SF4">
    <property type="entry name" value="FUCOSE MUTAROTASE"/>
    <property type="match status" value="1"/>
</dbReference>
<dbReference type="Pfam" id="PF05025">
    <property type="entry name" value="RbsD_FucU"/>
    <property type="match status" value="1"/>
</dbReference>
<dbReference type="SUPFAM" id="SSF102546">
    <property type="entry name" value="RbsD-like"/>
    <property type="match status" value="1"/>
</dbReference>
<comment type="function">
    <text evidence="1">Involved in the anomeric conversion of L-fucose.</text>
</comment>
<comment type="catalytic activity">
    <reaction evidence="1">
        <text>alpha-L-fucose = beta-L-fucose</text>
        <dbReference type="Rhea" id="RHEA:25580"/>
        <dbReference type="ChEBI" id="CHEBI:42548"/>
        <dbReference type="ChEBI" id="CHEBI:42589"/>
        <dbReference type="EC" id="5.1.3.29"/>
    </reaction>
</comment>
<comment type="pathway">
    <text evidence="1">Carbohydrate metabolism; L-fucose metabolism.</text>
</comment>
<comment type="subunit">
    <text evidence="1">Homodecamer.</text>
</comment>
<comment type="subcellular location">
    <subcellularLocation>
        <location evidence="1">Cytoplasm</location>
    </subcellularLocation>
</comment>
<comment type="similarity">
    <text evidence="1">Belongs to the RbsD / FucU family. FucU mutarotase subfamily.</text>
</comment>
<organism>
    <name type="scientific">Actinobacillus pleuropneumoniae serotype 5b (strain L20)</name>
    <dbReference type="NCBI Taxonomy" id="416269"/>
    <lineage>
        <taxon>Bacteria</taxon>
        <taxon>Pseudomonadati</taxon>
        <taxon>Pseudomonadota</taxon>
        <taxon>Gammaproteobacteria</taxon>
        <taxon>Pasteurellales</taxon>
        <taxon>Pasteurellaceae</taxon>
        <taxon>Actinobacillus</taxon>
    </lineage>
</organism>
<proteinExistence type="inferred from homology"/>
<accession>A3N2Y4</accession>